<comment type="function">
    <text evidence="1">Catalyzes the reversible conversion of 2-phosphoglycerate (2-PG) into phosphoenolpyruvate (PEP). It is essential for the degradation of carbohydrates via glycolysis.</text>
</comment>
<comment type="catalytic activity">
    <reaction evidence="1">
        <text>(2R)-2-phosphoglycerate = phosphoenolpyruvate + H2O</text>
        <dbReference type="Rhea" id="RHEA:10164"/>
        <dbReference type="ChEBI" id="CHEBI:15377"/>
        <dbReference type="ChEBI" id="CHEBI:58289"/>
        <dbReference type="ChEBI" id="CHEBI:58702"/>
        <dbReference type="EC" id="4.2.1.11"/>
    </reaction>
</comment>
<comment type="cofactor">
    <cofactor evidence="1">
        <name>Mg(2+)</name>
        <dbReference type="ChEBI" id="CHEBI:18420"/>
    </cofactor>
    <text evidence="1">Binds a second Mg(2+) ion via substrate during catalysis.</text>
</comment>
<comment type="pathway">
    <text evidence="1">Carbohydrate degradation; glycolysis; pyruvate from D-glyceraldehyde 3-phosphate: step 4/5.</text>
</comment>
<comment type="subcellular location">
    <subcellularLocation>
        <location evidence="1">Cytoplasm</location>
    </subcellularLocation>
    <subcellularLocation>
        <location evidence="1">Secreted</location>
    </subcellularLocation>
    <subcellularLocation>
        <location evidence="1">Cell surface</location>
    </subcellularLocation>
    <text evidence="1">Fractions of enolase are present in both the cytoplasm and on the cell surface.</text>
</comment>
<comment type="similarity">
    <text evidence="1">Belongs to the enolase family.</text>
</comment>
<protein>
    <recommendedName>
        <fullName evidence="1">Enolase</fullName>
        <ecNumber evidence="1">4.2.1.11</ecNumber>
    </recommendedName>
    <alternativeName>
        <fullName evidence="1">2-phospho-D-glycerate hydro-lyase</fullName>
    </alternativeName>
    <alternativeName>
        <fullName evidence="1">2-phosphoglycerate dehydratase</fullName>
    </alternativeName>
</protein>
<dbReference type="EC" id="4.2.1.11" evidence="1"/>
<dbReference type="EMBL" id="CP000394">
    <property type="protein sequence ID" value="ABI62079.1"/>
    <property type="molecule type" value="Genomic_DNA"/>
</dbReference>
<dbReference type="RefSeq" id="WP_011631888.1">
    <property type="nucleotide sequence ID" value="NC_008343.2"/>
</dbReference>
<dbReference type="SMR" id="Q0BSX3"/>
<dbReference type="STRING" id="391165.GbCGDNIH1_1181"/>
<dbReference type="GeneID" id="69745420"/>
<dbReference type="KEGG" id="gbe:GbCGDNIH1_1181"/>
<dbReference type="eggNOG" id="COG0148">
    <property type="taxonomic scope" value="Bacteria"/>
</dbReference>
<dbReference type="HOGENOM" id="CLU_031223_2_1_5"/>
<dbReference type="OrthoDB" id="9804716at2"/>
<dbReference type="UniPathway" id="UPA00109">
    <property type="reaction ID" value="UER00187"/>
</dbReference>
<dbReference type="Proteomes" id="UP000001963">
    <property type="component" value="Chromosome"/>
</dbReference>
<dbReference type="GO" id="GO:0009986">
    <property type="term" value="C:cell surface"/>
    <property type="evidence" value="ECO:0007669"/>
    <property type="project" value="UniProtKB-SubCell"/>
</dbReference>
<dbReference type="GO" id="GO:0005576">
    <property type="term" value="C:extracellular region"/>
    <property type="evidence" value="ECO:0007669"/>
    <property type="project" value="UniProtKB-SubCell"/>
</dbReference>
<dbReference type="GO" id="GO:0000015">
    <property type="term" value="C:phosphopyruvate hydratase complex"/>
    <property type="evidence" value="ECO:0007669"/>
    <property type="project" value="InterPro"/>
</dbReference>
<dbReference type="GO" id="GO:0000287">
    <property type="term" value="F:magnesium ion binding"/>
    <property type="evidence" value="ECO:0007669"/>
    <property type="project" value="UniProtKB-UniRule"/>
</dbReference>
<dbReference type="GO" id="GO:0004634">
    <property type="term" value="F:phosphopyruvate hydratase activity"/>
    <property type="evidence" value="ECO:0007669"/>
    <property type="project" value="UniProtKB-UniRule"/>
</dbReference>
<dbReference type="GO" id="GO:0006096">
    <property type="term" value="P:glycolytic process"/>
    <property type="evidence" value="ECO:0007669"/>
    <property type="project" value="UniProtKB-UniRule"/>
</dbReference>
<dbReference type="CDD" id="cd03313">
    <property type="entry name" value="enolase"/>
    <property type="match status" value="1"/>
</dbReference>
<dbReference type="FunFam" id="3.20.20.120:FF:000001">
    <property type="entry name" value="Enolase"/>
    <property type="match status" value="1"/>
</dbReference>
<dbReference type="FunFam" id="3.30.390.10:FF:000001">
    <property type="entry name" value="Enolase"/>
    <property type="match status" value="1"/>
</dbReference>
<dbReference type="Gene3D" id="3.20.20.120">
    <property type="entry name" value="Enolase-like C-terminal domain"/>
    <property type="match status" value="1"/>
</dbReference>
<dbReference type="Gene3D" id="3.30.390.10">
    <property type="entry name" value="Enolase-like, N-terminal domain"/>
    <property type="match status" value="1"/>
</dbReference>
<dbReference type="HAMAP" id="MF_00318">
    <property type="entry name" value="Enolase"/>
    <property type="match status" value="1"/>
</dbReference>
<dbReference type="InterPro" id="IPR000941">
    <property type="entry name" value="Enolase"/>
</dbReference>
<dbReference type="InterPro" id="IPR036849">
    <property type="entry name" value="Enolase-like_C_sf"/>
</dbReference>
<dbReference type="InterPro" id="IPR029017">
    <property type="entry name" value="Enolase-like_N"/>
</dbReference>
<dbReference type="InterPro" id="IPR020810">
    <property type="entry name" value="Enolase_C"/>
</dbReference>
<dbReference type="InterPro" id="IPR020809">
    <property type="entry name" value="Enolase_CS"/>
</dbReference>
<dbReference type="InterPro" id="IPR020811">
    <property type="entry name" value="Enolase_N"/>
</dbReference>
<dbReference type="NCBIfam" id="TIGR01060">
    <property type="entry name" value="eno"/>
    <property type="match status" value="1"/>
</dbReference>
<dbReference type="PANTHER" id="PTHR11902">
    <property type="entry name" value="ENOLASE"/>
    <property type="match status" value="1"/>
</dbReference>
<dbReference type="PANTHER" id="PTHR11902:SF1">
    <property type="entry name" value="ENOLASE"/>
    <property type="match status" value="1"/>
</dbReference>
<dbReference type="Pfam" id="PF00113">
    <property type="entry name" value="Enolase_C"/>
    <property type="match status" value="1"/>
</dbReference>
<dbReference type="Pfam" id="PF03952">
    <property type="entry name" value="Enolase_N"/>
    <property type="match status" value="1"/>
</dbReference>
<dbReference type="PIRSF" id="PIRSF001400">
    <property type="entry name" value="Enolase"/>
    <property type="match status" value="1"/>
</dbReference>
<dbReference type="PRINTS" id="PR00148">
    <property type="entry name" value="ENOLASE"/>
</dbReference>
<dbReference type="SFLD" id="SFLDS00001">
    <property type="entry name" value="Enolase"/>
    <property type="match status" value="1"/>
</dbReference>
<dbReference type="SFLD" id="SFLDF00002">
    <property type="entry name" value="enolase"/>
    <property type="match status" value="1"/>
</dbReference>
<dbReference type="SMART" id="SM01192">
    <property type="entry name" value="Enolase_C"/>
    <property type="match status" value="1"/>
</dbReference>
<dbReference type="SMART" id="SM01193">
    <property type="entry name" value="Enolase_N"/>
    <property type="match status" value="1"/>
</dbReference>
<dbReference type="SUPFAM" id="SSF51604">
    <property type="entry name" value="Enolase C-terminal domain-like"/>
    <property type="match status" value="1"/>
</dbReference>
<dbReference type="SUPFAM" id="SSF54826">
    <property type="entry name" value="Enolase N-terminal domain-like"/>
    <property type="match status" value="1"/>
</dbReference>
<dbReference type="PROSITE" id="PS00164">
    <property type="entry name" value="ENOLASE"/>
    <property type="match status" value="1"/>
</dbReference>
<name>ENO_GRABC</name>
<keyword id="KW-0963">Cytoplasm</keyword>
<keyword id="KW-0324">Glycolysis</keyword>
<keyword id="KW-0456">Lyase</keyword>
<keyword id="KW-0460">Magnesium</keyword>
<keyword id="KW-0479">Metal-binding</keyword>
<keyword id="KW-1185">Reference proteome</keyword>
<keyword id="KW-0964">Secreted</keyword>
<gene>
    <name evidence="1" type="primary">eno</name>
    <name type="ordered locus">GbCGDNIH1_1181</name>
</gene>
<organism>
    <name type="scientific">Granulibacter bethesdensis (strain ATCC BAA-1260 / CGDNIH1)</name>
    <dbReference type="NCBI Taxonomy" id="391165"/>
    <lineage>
        <taxon>Bacteria</taxon>
        <taxon>Pseudomonadati</taxon>
        <taxon>Pseudomonadota</taxon>
        <taxon>Alphaproteobacteria</taxon>
        <taxon>Acetobacterales</taxon>
        <taxon>Acetobacteraceae</taxon>
        <taxon>Granulibacter</taxon>
    </lineage>
</organism>
<reference key="1">
    <citation type="journal article" date="2007" name="J. Bacteriol.">
        <title>Genome sequence analysis of the emerging human pathogenic acetic acid bacterium Granulibacter bethesdensis.</title>
        <authorList>
            <person name="Greenberg D.E."/>
            <person name="Porcella S.F."/>
            <person name="Zelazny A.M."/>
            <person name="Virtaneva K."/>
            <person name="Sturdevant D.E."/>
            <person name="Kupko J.J. III"/>
            <person name="Barbian K.D."/>
            <person name="Babar A."/>
            <person name="Dorward D.W."/>
            <person name="Holland S.M."/>
        </authorList>
    </citation>
    <scope>NUCLEOTIDE SEQUENCE [LARGE SCALE GENOMIC DNA]</scope>
    <source>
        <strain>ATCC BAA-1260 / CGDNIH1</strain>
    </source>
</reference>
<proteinExistence type="inferred from homology"/>
<accession>Q0BSX3</accession>
<evidence type="ECO:0000255" key="1">
    <source>
        <dbReference type="HAMAP-Rule" id="MF_00318"/>
    </source>
</evidence>
<sequence length="425" mass="44964">MAAIADIIAREILDSRGNPTVEVDVTLESGAQGRAAVPSGASTGAHEAVELRDGDKSRYGGKGVLHAVSFVEGEIFEAIGGMDASEQLRIDETLIAVDGTPNKSRLGANAMLAVSLATAKAAANHQGVPLYRYLGGVYARTLPVPMMNIVNGGKHADNPIDIQEFMIQPVAAPTIADAVRVGAEIFAALKKELSAAGHNTNVGDEGGFAPGLKSAEEALSFITKACEKAGYRPGEDVTFALDCAATEFFKDGVYDLEGEGKKFDAAGMVRYLEDLAAKFPIVSIEDGLAEDDWEGWKLLTDTLGRKVQLVGDDLFVTNPDRLRHGIALGTANAILVKVNQIGTLSETLEAVETAHRAGYAAVMSHRSGETEDSTIADLAVATNCGQIKTGSLSRSDRTAKYNQLIRIEQDLDTSGRYAGRTILRG</sequence>
<feature type="chain" id="PRO_0000267040" description="Enolase">
    <location>
        <begin position="1"/>
        <end position="425"/>
    </location>
</feature>
<feature type="active site" description="Proton donor" evidence="1">
    <location>
        <position position="205"/>
    </location>
</feature>
<feature type="active site" description="Proton acceptor" evidence="1">
    <location>
        <position position="337"/>
    </location>
</feature>
<feature type="binding site" evidence="1">
    <location>
        <position position="163"/>
    </location>
    <ligand>
        <name>(2R)-2-phosphoglycerate</name>
        <dbReference type="ChEBI" id="CHEBI:58289"/>
    </ligand>
</feature>
<feature type="binding site" evidence="1">
    <location>
        <position position="242"/>
    </location>
    <ligand>
        <name>Mg(2+)</name>
        <dbReference type="ChEBI" id="CHEBI:18420"/>
    </ligand>
</feature>
<feature type="binding site" evidence="1">
    <location>
        <position position="285"/>
    </location>
    <ligand>
        <name>Mg(2+)</name>
        <dbReference type="ChEBI" id="CHEBI:18420"/>
    </ligand>
</feature>
<feature type="binding site" evidence="1">
    <location>
        <position position="312"/>
    </location>
    <ligand>
        <name>Mg(2+)</name>
        <dbReference type="ChEBI" id="CHEBI:18420"/>
    </ligand>
</feature>
<feature type="binding site" evidence="1">
    <location>
        <position position="337"/>
    </location>
    <ligand>
        <name>(2R)-2-phosphoglycerate</name>
        <dbReference type="ChEBI" id="CHEBI:58289"/>
    </ligand>
</feature>
<feature type="binding site" evidence="1">
    <location>
        <position position="366"/>
    </location>
    <ligand>
        <name>(2R)-2-phosphoglycerate</name>
        <dbReference type="ChEBI" id="CHEBI:58289"/>
    </ligand>
</feature>
<feature type="binding site" evidence="1">
    <location>
        <position position="367"/>
    </location>
    <ligand>
        <name>(2R)-2-phosphoglycerate</name>
        <dbReference type="ChEBI" id="CHEBI:58289"/>
    </ligand>
</feature>
<feature type="binding site" evidence="1">
    <location>
        <position position="388"/>
    </location>
    <ligand>
        <name>(2R)-2-phosphoglycerate</name>
        <dbReference type="ChEBI" id="CHEBI:58289"/>
    </ligand>
</feature>